<gene>
    <name evidence="1" type="primary">rlmN</name>
    <name type="ordered locus">NGK_1322</name>
</gene>
<evidence type="ECO:0000255" key="1">
    <source>
        <dbReference type="HAMAP-Rule" id="MF_01849"/>
    </source>
</evidence>
<evidence type="ECO:0000255" key="2">
    <source>
        <dbReference type="PROSITE-ProRule" id="PRU01266"/>
    </source>
</evidence>
<name>RLMN_NEIG2</name>
<sequence length="364" mass="41072">MKTNLLNYDLQGLTRHFADMGEKPFRAKQVMRWMHQSGAQNFDEMTDLAKSLRHKLNEQASIEIPKLMMSQESSDGTRKWLLDVGTGNGVETVFIPESDRGTLCISSQVGCALECTFCSTGRQGFNRNLTAAEIIGQLWWANKAMGVTPKNERVISNVVMMGMGEPMANFDNVVTALSIMLDDHGYGLSRRRVTVSTSGMVPQMDRLRDVMPVALAVSLHASNDEVRNQIVPLNKKYPLKELMAACQRYLVKAPRDFITFEYVMLDGVNDKAQHAYELIELVKDVPCKFNLIPFNPFPNSGYERSSNENIRIFRDILQQAEFVVTVRKTRGDDIDAACGQLAGQVQDKTRRQQKWQQILIGQQG</sequence>
<organism>
    <name type="scientific">Neisseria gonorrhoeae (strain NCCP11945)</name>
    <dbReference type="NCBI Taxonomy" id="521006"/>
    <lineage>
        <taxon>Bacteria</taxon>
        <taxon>Pseudomonadati</taxon>
        <taxon>Pseudomonadota</taxon>
        <taxon>Betaproteobacteria</taxon>
        <taxon>Neisseriales</taxon>
        <taxon>Neisseriaceae</taxon>
        <taxon>Neisseria</taxon>
    </lineage>
</organism>
<comment type="function">
    <text evidence="1">Specifically methylates position 2 of adenine 2503 in 23S rRNA and position 2 of adenine 37 in tRNAs. m2A2503 modification seems to play a crucial role in the proofreading step occurring at the peptidyl transferase center and thus would serve to optimize ribosomal fidelity.</text>
</comment>
<comment type="catalytic activity">
    <reaction evidence="1">
        <text>adenosine(2503) in 23S rRNA + 2 reduced [2Fe-2S]-[ferredoxin] + 2 S-adenosyl-L-methionine = 2-methyladenosine(2503) in 23S rRNA + 5'-deoxyadenosine + L-methionine + 2 oxidized [2Fe-2S]-[ferredoxin] + S-adenosyl-L-homocysteine</text>
        <dbReference type="Rhea" id="RHEA:42916"/>
        <dbReference type="Rhea" id="RHEA-COMP:10000"/>
        <dbReference type="Rhea" id="RHEA-COMP:10001"/>
        <dbReference type="Rhea" id="RHEA-COMP:10152"/>
        <dbReference type="Rhea" id="RHEA-COMP:10282"/>
        <dbReference type="ChEBI" id="CHEBI:17319"/>
        <dbReference type="ChEBI" id="CHEBI:33737"/>
        <dbReference type="ChEBI" id="CHEBI:33738"/>
        <dbReference type="ChEBI" id="CHEBI:57844"/>
        <dbReference type="ChEBI" id="CHEBI:57856"/>
        <dbReference type="ChEBI" id="CHEBI:59789"/>
        <dbReference type="ChEBI" id="CHEBI:74411"/>
        <dbReference type="ChEBI" id="CHEBI:74497"/>
        <dbReference type="EC" id="2.1.1.192"/>
    </reaction>
</comment>
<comment type="catalytic activity">
    <reaction evidence="1">
        <text>adenosine(37) in tRNA + 2 reduced [2Fe-2S]-[ferredoxin] + 2 S-adenosyl-L-methionine = 2-methyladenosine(37) in tRNA + 5'-deoxyadenosine + L-methionine + 2 oxidized [2Fe-2S]-[ferredoxin] + S-adenosyl-L-homocysteine</text>
        <dbReference type="Rhea" id="RHEA:43332"/>
        <dbReference type="Rhea" id="RHEA-COMP:10000"/>
        <dbReference type="Rhea" id="RHEA-COMP:10001"/>
        <dbReference type="Rhea" id="RHEA-COMP:10162"/>
        <dbReference type="Rhea" id="RHEA-COMP:10485"/>
        <dbReference type="ChEBI" id="CHEBI:17319"/>
        <dbReference type="ChEBI" id="CHEBI:33737"/>
        <dbReference type="ChEBI" id="CHEBI:33738"/>
        <dbReference type="ChEBI" id="CHEBI:57844"/>
        <dbReference type="ChEBI" id="CHEBI:57856"/>
        <dbReference type="ChEBI" id="CHEBI:59789"/>
        <dbReference type="ChEBI" id="CHEBI:74411"/>
        <dbReference type="ChEBI" id="CHEBI:74497"/>
        <dbReference type="EC" id="2.1.1.192"/>
    </reaction>
</comment>
<comment type="cofactor">
    <cofactor evidence="1">
        <name>[4Fe-4S] cluster</name>
        <dbReference type="ChEBI" id="CHEBI:49883"/>
    </cofactor>
    <text evidence="1">Binds 1 [4Fe-4S] cluster. The cluster is coordinated with 3 cysteines and an exchangeable S-adenosyl-L-methionine.</text>
</comment>
<comment type="subcellular location">
    <subcellularLocation>
        <location evidence="1">Cytoplasm</location>
    </subcellularLocation>
</comment>
<comment type="miscellaneous">
    <text evidence="1">Reaction proceeds by a ping-pong mechanism involving intermediate methylation of a conserved cysteine residue.</text>
</comment>
<comment type="similarity">
    <text evidence="1">Belongs to the radical SAM superfamily. RlmN family.</text>
</comment>
<feature type="chain" id="PRO_1000188586" description="Dual-specificity RNA methyltransferase RlmN">
    <location>
        <begin position="1"/>
        <end position="364"/>
    </location>
</feature>
<feature type="domain" description="Radical SAM core" evidence="2">
    <location>
        <begin position="97"/>
        <end position="333"/>
    </location>
</feature>
<feature type="active site" description="Proton acceptor" evidence="1">
    <location>
        <position position="91"/>
    </location>
</feature>
<feature type="active site" description="S-methylcysteine intermediate" evidence="1">
    <location>
        <position position="338"/>
    </location>
</feature>
<feature type="binding site" evidence="1">
    <location>
        <position position="111"/>
    </location>
    <ligand>
        <name>[4Fe-4S] cluster</name>
        <dbReference type="ChEBI" id="CHEBI:49883"/>
        <note>4Fe-4S-S-AdoMet</note>
    </ligand>
</feature>
<feature type="binding site" evidence="1">
    <location>
        <position position="115"/>
    </location>
    <ligand>
        <name>[4Fe-4S] cluster</name>
        <dbReference type="ChEBI" id="CHEBI:49883"/>
        <note>4Fe-4S-S-AdoMet</note>
    </ligand>
</feature>
<feature type="binding site" evidence="1">
    <location>
        <position position="118"/>
    </location>
    <ligand>
        <name>[4Fe-4S] cluster</name>
        <dbReference type="ChEBI" id="CHEBI:49883"/>
        <note>4Fe-4S-S-AdoMet</note>
    </ligand>
</feature>
<feature type="binding site" evidence="1">
    <location>
        <begin position="164"/>
        <end position="165"/>
    </location>
    <ligand>
        <name>S-adenosyl-L-methionine</name>
        <dbReference type="ChEBI" id="CHEBI:59789"/>
    </ligand>
</feature>
<feature type="binding site" evidence="1">
    <location>
        <position position="196"/>
    </location>
    <ligand>
        <name>S-adenosyl-L-methionine</name>
        <dbReference type="ChEBI" id="CHEBI:59789"/>
    </ligand>
</feature>
<feature type="binding site" evidence="1">
    <location>
        <begin position="218"/>
        <end position="220"/>
    </location>
    <ligand>
        <name>S-adenosyl-L-methionine</name>
        <dbReference type="ChEBI" id="CHEBI:59789"/>
    </ligand>
</feature>
<feature type="binding site" evidence="1">
    <location>
        <position position="295"/>
    </location>
    <ligand>
        <name>S-adenosyl-L-methionine</name>
        <dbReference type="ChEBI" id="CHEBI:59789"/>
    </ligand>
</feature>
<feature type="disulfide bond" description="(transient)" evidence="1">
    <location>
        <begin position="104"/>
        <end position="338"/>
    </location>
</feature>
<dbReference type="EC" id="2.1.1.192" evidence="1"/>
<dbReference type="EMBL" id="CP001050">
    <property type="protein sequence ID" value="ACF29997.1"/>
    <property type="molecule type" value="Genomic_DNA"/>
</dbReference>
<dbReference type="RefSeq" id="WP_003688948.1">
    <property type="nucleotide sequence ID" value="NC_011035.1"/>
</dbReference>
<dbReference type="SMR" id="B4RMG2"/>
<dbReference type="GeneID" id="66752935"/>
<dbReference type="KEGG" id="ngk:NGK_1322"/>
<dbReference type="HOGENOM" id="CLU_029101_0_0_4"/>
<dbReference type="Proteomes" id="UP000002564">
    <property type="component" value="Chromosome"/>
</dbReference>
<dbReference type="GO" id="GO:0005737">
    <property type="term" value="C:cytoplasm"/>
    <property type="evidence" value="ECO:0007669"/>
    <property type="project" value="UniProtKB-SubCell"/>
</dbReference>
<dbReference type="GO" id="GO:0051539">
    <property type="term" value="F:4 iron, 4 sulfur cluster binding"/>
    <property type="evidence" value="ECO:0007669"/>
    <property type="project" value="UniProtKB-UniRule"/>
</dbReference>
<dbReference type="GO" id="GO:0046872">
    <property type="term" value="F:metal ion binding"/>
    <property type="evidence" value="ECO:0007669"/>
    <property type="project" value="UniProtKB-KW"/>
</dbReference>
<dbReference type="GO" id="GO:0070040">
    <property type="term" value="F:rRNA (adenine(2503)-C2-)-methyltransferase activity"/>
    <property type="evidence" value="ECO:0007669"/>
    <property type="project" value="UniProtKB-UniRule"/>
</dbReference>
<dbReference type="GO" id="GO:0019843">
    <property type="term" value="F:rRNA binding"/>
    <property type="evidence" value="ECO:0007669"/>
    <property type="project" value="UniProtKB-UniRule"/>
</dbReference>
<dbReference type="GO" id="GO:0002935">
    <property type="term" value="F:tRNA (adenine(37)-C2)-methyltransferase activity"/>
    <property type="evidence" value="ECO:0007669"/>
    <property type="project" value="UniProtKB-UniRule"/>
</dbReference>
<dbReference type="GO" id="GO:0000049">
    <property type="term" value="F:tRNA binding"/>
    <property type="evidence" value="ECO:0007669"/>
    <property type="project" value="UniProtKB-UniRule"/>
</dbReference>
<dbReference type="GO" id="GO:0070475">
    <property type="term" value="P:rRNA base methylation"/>
    <property type="evidence" value="ECO:0007669"/>
    <property type="project" value="UniProtKB-UniRule"/>
</dbReference>
<dbReference type="GO" id="GO:0030488">
    <property type="term" value="P:tRNA methylation"/>
    <property type="evidence" value="ECO:0007669"/>
    <property type="project" value="UniProtKB-UniRule"/>
</dbReference>
<dbReference type="CDD" id="cd01335">
    <property type="entry name" value="Radical_SAM"/>
    <property type="match status" value="1"/>
</dbReference>
<dbReference type="FunFam" id="1.10.150.530:FF:000003">
    <property type="entry name" value="Dual-specificity RNA methyltransferase RlmN"/>
    <property type="match status" value="1"/>
</dbReference>
<dbReference type="FunFam" id="3.20.20.70:FF:000008">
    <property type="entry name" value="Dual-specificity RNA methyltransferase RlmN"/>
    <property type="match status" value="1"/>
</dbReference>
<dbReference type="Gene3D" id="1.10.150.530">
    <property type="match status" value="1"/>
</dbReference>
<dbReference type="Gene3D" id="3.20.20.70">
    <property type="entry name" value="Aldolase class I"/>
    <property type="match status" value="1"/>
</dbReference>
<dbReference type="HAMAP" id="MF_01849">
    <property type="entry name" value="RNA_methyltr_RlmN"/>
    <property type="match status" value="1"/>
</dbReference>
<dbReference type="InterPro" id="IPR013785">
    <property type="entry name" value="Aldolase_TIM"/>
</dbReference>
<dbReference type="InterPro" id="IPR040072">
    <property type="entry name" value="Methyltransferase_A"/>
</dbReference>
<dbReference type="InterPro" id="IPR048641">
    <property type="entry name" value="RlmN_N"/>
</dbReference>
<dbReference type="InterPro" id="IPR027492">
    <property type="entry name" value="RNA_MTrfase_RlmN"/>
</dbReference>
<dbReference type="InterPro" id="IPR004383">
    <property type="entry name" value="rRNA_lsu_MTrfase_RlmN/Cfr"/>
</dbReference>
<dbReference type="InterPro" id="IPR007197">
    <property type="entry name" value="rSAM"/>
</dbReference>
<dbReference type="NCBIfam" id="TIGR00048">
    <property type="entry name" value="rRNA_mod_RlmN"/>
    <property type="match status" value="1"/>
</dbReference>
<dbReference type="PANTHER" id="PTHR30544">
    <property type="entry name" value="23S RRNA METHYLTRANSFERASE"/>
    <property type="match status" value="1"/>
</dbReference>
<dbReference type="PANTHER" id="PTHR30544:SF5">
    <property type="entry name" value="RADICAL SAM CORE DOMAIN-CONTAINING PROTEIN"/>
    <property type="match status" value="1"/>
</dbReference>
<dbReference type="Pfam" id="PF04055">
    <property type="entry name" value="Radical_SAM"/>
    <property type="match status" value="1"/>
</dbReference>
<dbReference type="Pfam" id="PF21016">
    <property type="entry name" value="RlmN_N"/>
    <property type="match status" value="1"/>
</dbReference>
<dbReference type="PIRSF" id="PIRSF006004">
    <property type="entry name" value="CHP00048"/>
    <property type="match status" value="1"/>
</dbReference>
<dbReference type="SFLD" id="SFLDF00275">
    <property type="entry name" value="adenosine_C2_methyltransferase"/>
    <property type="match status" value="1"/>
</dbReference>
<dbReference type="SFLD" id="SFLDG01062">
    <property type="entry name" value="methyltransferase_(Class_A)"/>
    <property type="match status" value="1"/>
</dbReference>
<dbReference type="SUPFAM" id="SSF102114">
    <property type="entry name" value="Radical SAM enzymes"/>
    <property type="match status" value="1"/>
</dbReference>
<dbReference type="PROSITE" id="PS51918">
    <property type="entry name" value="RADICAL_SAM"/>
    <property type="match status" value="1"/>
</dbReference>
<reference key="1">
    <citation type="journal article" date="2008" name="J. Bacteriol.">
        <title>Complete genome sequence of Neisseria gonorrhoeae NCCP11945.</title>
        <authorList>
            <person name="Chung G.T."/>
            <person name="Yoo J.S."/>
            <person name="Oh H.B."/>
            <person name="Lee Y.S."/>
            <person name="Cha S.H."/>
            <person name="Kim S.J."/>
            <person name="Yoo C.K."/>
        </authorList>
    </citation>
    <scope>NUCLEOTIDE SEQUENCE [LARGE SCALE GENOMIC DNA]</scope>
    <source>
        <strain>NCCP11945</strain>
    </source>
</reference>
<keyword id="KW-0004">4Fe-4S</keyword>
<keyword id="KW-0963">Cytoplasm</keyword>
<keyword id="KW-1015">Disulfide bond</keyword>
<keyword id="KW-0408">Iron</keyword>
<keyword id="KW-0411">Iron-sulfur</keyword>
<keyword id="KW-0479">Metal-binding</keyword>
<keyword id="KW-0489">Methyltransferase</keyword>
<keyword id="KW-0698">rRNA processing</keyword>
<keyword id="KW-0949">S-adenosyl-L-methionine</keyword>
<keyword id="KW-0808">Transferase</keyword>
<keyword id="KW-0819">tRNA processing</keyword>
<protein>
    <recommendedName>
        <fullName evidence="1">Dual-specificity RNA methyltransferase RlmN</fullName>
        <ecNumber evidence="1">2.1.1.192</ecNumber>
    </recommendedName>
    <alternativeName>
        <fullName evidence="1">23S rRNA (adenine(2503)-C(2))-methyltransferase</fullName>
    </alternativeName>
    <alternativeName>
        <fullName evidence="1">23S rRNA m2A2503 methyltransferase</fullName>
    </alternativeName>
    <alternativeName>
        <fullName evidence="1">Ribosomal RNA large subunit methyltransferase N</fullName>
    </alternativeName>
    <alternativeName>
        <fullName evidence="1">tRNA (adenine(37)-C(2))-methyltransferase</fullName>
    </alternativeName>
    <alternativeName>
        <fullName evidence="1">tRNA m2A37 methyltransferase</fullName>
    </alternativeName>
</protein>
<accession>B4RMG2</accession>
<proteinExistence type="inferred from homology"/>